<organism>
    <name type="scientific">Homo sapiens</name>
    <name type="common">Human</name>
    <dbReference type="NCBI Taxonomy" id="9606"/>
    <lineage>
        <taxon>Eukaryota</taxon>
        <taxon>Metazoa</taxon>
        <taxon>Chordata</taxon>
        <taxon>Craniata</taxon>
        <taxon>Vertebrata</taxon>
        <taxon>Euteleostomi</taxon>
        <taxon>Mammalia</taxon>
        <taxon>Eutheria</taxon>
        <taxon>Euarchontoglires</taxon>
        <taxon>Primates</taxon>
        <taxon>Haplorrhini</taxon>
        <taxon>Catarrhini</taxon>
        <taxon>Hominidae</taxon>
        <taxon>Homo</taxon>
    </lineage>
</organism>
<sequence>MSQVQVQVQNPSAALSGSQILNKNQSLLSQPLMSIPSTTSSLPSENAGRPIQNSALPSASITSTSAAAESITPTVELNALCMKLGKKPMYKPVDPYSRMQSTYNYNMRGGAYPPRYFYPFPVPPLLYQVELSVGGQQFNGKGKTRQAAKHDAAAKALRILQNEPLPERLEVNGRESEEENLNKSEISQVFEIALKRNLPVNFEVARESGPPHMKNFVTKVSVGEFVGEGEGKSKKISKKNAAIAVLEELKKLPPLPAVERVKPRIKKKTKPIVKPQTSPEYGQGINPISRLAQIQQAKKEKEPEYTLLTERGLPRRREFVMQVKVGNHTAEGTGTNKKVAKRNAAENMLEILGFKVPQAQPTKPALKSEEKTPIKKPGDGRKVTFFEPGSGDENGTSNKEDEFRMPYLSHQQLPAGILPMVPEVAQAVGVSQGHHTKDFTRAAPNPAKATVTAMIARELLYGGTSPTAETILKNNISSGHVPHGPLTRPSEQLDYLSRVQGFQVEYKDFPKNNKNEFVSLINCSSQPPLISHGIGKDVESCHDMAALNILKLLSELDQQSTEMPRTGNGPMSVCGRC</sequence>
<keyword id="KW-0002">3D-structure</keyword>
<keyword id="KW-0007">Acetylation</keyword>
<keyword id="KW-0025">Alternative splicing</keyword>
<keyword id="KW-0963">Cytoplasm</keyword>
<keyword id="KW-0256">Endoplasmic reticulum</keyword>
<keyword id="KW-0945">Host-virus interaction</keyword>
<keyword id="KW-0488">Methylation</keyword>
<keyword id="KW-0597">Phosphoprotein</keyword>
<keyword id="KW-1267">Proteomics identification</keyword>
<keyword id="KW-1185">Reference proteome</keyword>
<keyword id="KW-0677">Repeat</keyword>
<keyword id="KW-0694">RNA-binding</keyword>
<proteinExistence type="evidence at protein level"/>
<name>STAU1_HUMAN</name>
<dbReference type="EMBL" id="AF061939">
    <property type="protein sequence ID" value="AAD17531.1"/>
    <property type="molecule type" value="mRNA"/>
</dbReference>
<dbReference type="EMBL" id="AF061941">
    <property type="protein sequence ID" value="AAD17533.1"/>
    <property type="molecule type" value="mRNA"/>
</dbReference>
<dbReference type="EMBL" id="AF061938">
    <property type="protein sequence ID" value="AAD17530.1"/>
    <property type="molecule type" value="mRNA"/>
</dbReference>
<dbReference type="EMBL" id="AF061940">
    <property type="protein sequence ID" value="AAD17532.1"/>
    <property type="molecule type" value="mRNA"/>
</dbReference>
<dbReference type="EMBL" id="AJ132258">
    <property type="protein sequence ID" value="CAB40082.1"/>
    <property type="molecule type" value="mRNA"/>
</dbReference>
<dbReference type="EMBL" id="AY529074">
    <property type="protein sequence ID" value="AAS76636.1"/>
    <property type="molecule type" value="mRNA"/>
</dbReference>
<dbReference type="EMBL" id="AY546099">
    <property type="protein sequence ID" value="AAS76637.1"/>
    <property type="molecule type" value="mRNA"/>
</dbReference>
<dbReference type="EMBL" id="AL136601">
    <property type="protein sequence ID" value="CAB66536.1"/>
    <property type="molecule type" value="mRNA"/>
</dbReference>
<dbReference type="EMBL" id="AK292859">
    <property type="protein sequence ID" value="BAF85548.1"/>
    <property type="molecule type" value="mRNA"/>
</dbReference>
<dbReference type="EMBL" id="AL133174">
    <property type="status" value="NOT_ANNOTATED_CDS"/>
    <property type="molecule type" value="Genomic_DNA"/>
</dbReference>
<dbReference type="EMBL" id="CH471077">
    <property type="protein sequence ID" value="EAW75669.1"/>
    <property type="molecule type" value="Genomic_DNA"/>
</dbReference>
<dbReference type="EMBL" id="CH471077">
    <property type="protein sequence ID" value="EAW75671.1"/>
    <property type="molecule type" value="Genomic_DNA"/>
</dbReference>
<dbReference type="EMBL" id="CH471077">
    <property type="protein sequence ID" value="EAW75672.1"/>
    <property type="molecule type" value="Genomic_DNA"/>
</dbReference>
<dbReference type="EMBL" id="CH471077">
    <property type="protein sequence ID" value="EAW75673.1"/>
    <property type="molecule type" value="Genomic_DNA"/>
</dbReference>
<dbReference type="EMBL" id="CH471077">
    <property type="protein sequence ID" value="EAW75674.1"/>
    <property type="molecule type" value="Genomic_DNA"/>
</dbReference>
<dbReference type="EMBL" id="BC050432">
    <property type="protein sequence ID" value="AAH50432.1"/>
    <property type="molecule type" value="mRNA"/>
</dbReference>
<dbReference type="EMBL" id="BC095397">
    <property type="protein sequence ID" value="AAH95397.1"/>
    <property type="molecule type" value="mRNA"/>
</dbReference>
<dbReference type="CCDS" id="CCDS13414.1">
    <molecule id="O95793-1"/>
</dbReference>
<dbReference type="CCDS" id="CCDS13415.1">
    <molecule id="O95793-2"/>
</dbReference>
<dbReference type="CCDS" id="CCDS33481.1">
    <molecule id="O95793-3"/>
</dbReference>
<dbReference type="RefSeq" id="NP_001032405.1">
    <molecule id="O95793-3"/>
    <property type="nucleotide sequence ID" value="NM_001037328.3"/>
</dbReference>
<dbReference type="RefSeq" id="NP_001306063.1">
    <molecule id="O95793-3"/>
    <property type="nucleotide sequence ID" value="NM_001319134.2"/>
</dbReference>
<dbReference type="RefSeq" id="NP_001306064.1">
    <molecule id="O95793-1"/>
    <property type="nucleotide sequence ID" value="NM_001319135.2"/>
</dbReference>
<dbReference type="RefSeq" id="NP_001309856.1">
    <molecule id="O95793-3"/>
    <property type="nucleotide sequence ID" value="NM_001322927.2"/>
</dbReference>
<dbReference type="RefSeq" id="NP_001309858.1">
    <molecule id="O95793-1"/>
    <property type="nucleotide sequence ID" value="NM_001322929.2"/>
</dbReference>
<dbReference type="RefSeq" id="NP_001309859.1">
    <molecule id="O95793-1"/>
    <property type="nucleotide sequence ID" value="NM_001322930.2"/>
</dbReference>
<dbReference type="RefSeq" id="NP_004593.2">
    <molecule id="O95793-2"/>
    <property type="nucleotide sequence ID" value="NM_004602.4"/>
</dbReference>
<dbReference type="RefSeq" id="NP_059346.2">
    <molecule id="O95793-2"/>
    <property type="nucleotide sequence ID" value="NM_017452.4"/>
</dbReference>
<dbReference type="RefSeq" id="NP_059347.2">
    <molecule id="O95793-1"/>
    <property type="nucleotide sequence ID" value="NM_017453.4"/>
</dbReference>
<dbReference type="RefSeq" id="NP_059348.2">
    <molecule id="O95793-2"/>
    <property type="nucleotide sequence ID" value="NM_017454.4"/>
</dbReference>
<dbReference type="RefSeq" id="XP_005260584.1">
    <molecule id="O95793-3"/>
    <property type="nucleotide sequence ID" value="XM_005260527.1"/>
</dbReference>
<dbReference type="RefSeq" id="XP_047296374.1">
    <molecule id="O95793-1"/>
    <property type="nucleotide sequence ID" value="XM_047440418.1"/>
</dbReference>
<dbReference type="RefSeq" id="XP_047296375.1">
    <molecule id="O95793-1"/>
    <property type="nucleotide sequence ID" value="XM_047440419.1"/>
</dbReference>
<dbReference type="RefSeq" id="XP_047296376.1">
    <molecule id="O95793-1"/>
    <property type="nucleotide sequence ID" value="XM_047440420.1"/>
</dbReference>
<dbReference type="RefSeq" id="XP_047296377.1">
    <molecule id="O95793-1"/>
    <property type="nucleotide sequence ID" value="XM_047440421.1"/>
</dbReference>
<dbReference type="RefSeq" id="XP_047296378.1">
    <molecule id="O95793-1"/>
    <property type="nucleotide sequence ID" value="XM_047440422.1"/>
</dbReference>
<dbReference type="RefSeq" id="XP_054179898.1">
    <molecule id="O95793-1"/>
    <property type="nucleotide sequence ID" value="XM_054323923.1"/>
</dbReference>
<dbReference type="RefSeq" id="XP_054179899.1">
    <molecule id="O95793-1"/>
    <property type="nucleotide sequence ID" value="XM_054323924.1"/>
</dbReference>
<dbReference type="RefSeq" id="XP_054179900.1">
    <molecule id="O95793-1"/>
    <property type="nucleotide sequence ID" value="XM_054323925.1"/>
</dbReference>
<dbReference type="RefSeq" id="XP_054179901.1">
    <molecule id="O95793-1"/>
    <property type="nucleotide sequence ID" value="XM_054323926.1"/>
</dbReference>
<dbReference type="RefSeq" id="XP_054179905.1">
    <molecule id="O95793-3"/>
    <property type="nucleotide sequence ID" value="XM_054323930.1"/>
</dbReference>
<dbReference type="PDB" id="4DKK">
    <property type="method" value="X-ray"/>
    <property type="resolution" value="1.70 A"/>
    <property type="chains" value="A=448-557"/>
</dbReference>
<dbReference type="PDB" id="6HTU">
    <property type="method" value="X-ray"/>
    <property type="resolution" value="2.89 A"/>
    <property type="chains" value="A/B/C=182-360"/>
</dbReference>
<dbReference type="PDB" id="6SDW">
    <property type="method" value="NMR"/>
    <property type="chains" value="A=183-355"/>
</dbReference>
<dbReference type="PDB" id="6SDY">
    <property type="method" value="NMR"/>
    <property type="chains" value="A=286-355"/>
</dbReference>
<dbReference type="PDBsum" id="4DKK"/>
<dbReference type="PDBsum" id="6HTU"/>
<dbReference type="PDBsum" id="6SDW"/>
<dbReference type="PDBsum" id="6SDY"/>
<dbReference type="SASBDB" id="O95793"/>
<dbReference type="SMR" id="O95793"/>
<dbReference type="BioGRID" id="112657">
    <property type="interactions" value="1560"/>
</dbReference>
<dbReference type="CORUM" id="O95793"/>
<dbReference type="FunCoup" id="O95793">
    <property type="interactions" value="3434"/>
</dbReference>
<dbReference type="IntAct" id="O95793">
    <property type="interactions" value="300"/>
</dbReference>
<dbReference type="MINT" id="O95793"/>
<dbReference type="STRING" id="9606.ENSP00000360922"/>
<dbReference type="GlyGen" id="O95793">
    <property type="glycosylation" value="6 sites, 2 O-linked glycans (5 sites)"/>
</dbReference>
<dbReference type="iPTMnet" id="O95793"/>
<dbReference type="MetOSite" id="O95793"/>
<dbReference type="PhosphoSitePlus" id="O95793"/>
<dbReference type="SwissPalm" id="O95793"/>
<dbReference type="BioMuta" id="STAU1"/>
<dbReference type="jPOST" id="O95793"/>
<dbReference type="MassIVE" id="O95793"/>
<dbReference type="PaxDb" id="9606-ENSP00000360922"/>
<dbReference type="PeptideAtlas" id="O95793"/>
<dbReference type="ProteomicsDB" id="51054">
    <molecule id="O95793-1"/>
</dbReference>
<dbReference type="ProteomicsDB" id="51055">
    <molecule id="O95793-2"/>
</dbReference>
<dbReference type="ProteomicsDB" id="51056">
    <molecule id="O95793-3"/>
</dbReference>
<dbReference type="Pumba" id="O95793"/>
<dbReference type="Antibodypedia" id="13554">
    <property type="antibodies" value="417 antibodies from 37 providers"/>
</dbReference>
<dbReference type="DNASU" id="6780"/>
<dbReference type="Ensembl" id="ENST00000340954.11">
    <molecule id="O95793-2"/>
    <property type="protein sequence ID" value="ENSP00000345425.6"/>
    <property type="gene ID" value="ENSG00000124214.21"/>
</dbReference>
<dbReference type="Ensembl" id="ENST00000347458.9">
    <molecule id="O95793-2"/>
    <property type="protein sequence ID" value="ENSP00000323443.7"/>
    <property type="gene ID" value="ENSG00000124214.21"/>
</dbReference>
<dbReference type="Ensembl" id="ENST00000360426.8">
    <molecule id="O95793-2"/>
    <property type="protein sequence ID" value="ENSP00000353604.4"/>
    <property type="gene ID" value="ENSG00000124214.21"/>
</dbReference>
<dbReference type="Ensembl" id="ENST00000371802.5">
    <molecule id="O95793-3"/>
    <property type="protein sequence ID" value="ENSP00000360867.1"/>
    <property type="gene ID" value="ENSG00000124214.21"/>
</dbReference>
<dbReference type="Ensembl" id="ENST00000371828.7">
    <molecule id="O95793-3"/>
    <property type="protein sequence ID" value="ENSP00000360893.3"/>
    <property type="gene ID" value="ENSG00000124214.21"/>
</dbReference>
<dbReference type="Ensembl" id="ENST00000371856.7">
    <molecule id="O95793-1"/>
    <property type="protein sequence ID" value="ENSP00000360922.2"/>
    <property type="gene ID" value="ENSG00000124214.21"/>
</dbReference>
<dbReference type="GeneID" id="6780"/>
<dbReference type="KEGG" id="hsa:6780"/>
<dbReference type="MANE-Select" id="ENST00000371856.7">
    <property type="protein sequence ID" value="ENSP00000360922.2"/>
    <property type="RefSeq nucleotide sequence ID" value="NM_017453.4"/>
    <property type="RefSeq protein sequence ID" value="NP_059347.2"/>
</dbReference>
<dbReference type="UCSC" id="uc002xua.4">
    <molecule id="O95793-1"/>
    <property type="organism name" value="human"/>
</dbReference>
<dbReference type="AGR" id="HGNC:11370"/>
<dbReference type="CTD" id="6780"/>
<dbReference type="DisGeNET" id="6780"/>
<dbReference type="GeneCards" id="STAU1"/>
<dbReference type="HGNC" id="HGNC:11370">
    <property type="gene designation" value="STAU1"/>
</dbReference>
<dbReference type="HPA" id="ENSG00000124214">
    <property type="expression patterns" value="Low tissue specificity"/>
</dbReference>
<dbReference type="MIM" id="601716">
    <property type="type" value="gene"/>
</dbReference>
<dbReference type="neXtProt" id="NX_O95793"/>
<dbReference type="OpenTargets" id="ENSG00000124214"/>
<dbReference type="PharmGKB" id="PA36188"/>
<dbReference type="VEuPathDB" id="HostDB:ENSG00000124214"/>
<dbReference type="eggNOG" id="KOG3732">
    <property type="taxonomic scope" value="Eukaryota"/>
</dbReference>
<dbReference type="GeneTree" id="ENSGT00940000157304"/>
<dbReference type="InParanoid" id="O95793"/>
<dbReference type="OMA" id="DIESCHD"/>
<dbReference type="OrthoDB" id="10056847at2759"/>
<dbReference type="PAN-GO" id="O95793">
    <property type="GO annotations" value="11 GO annotations based on evolutionary models"/>
</dbReference>
<dbReference type="PhylomeDB" id="O95793"/>
<dbReference type="TreeFam" id="TF350296"/>
<dbReference type="PathwayCommons" id="O95793"/>
<dbReference type="SignaLink" id="O95793"/>
<dbReference type="BioGRID-ORCS" id="6780">
    <property type="hits" value="20 hits in 1168 CRISPR screens"/>
</dbReference>
<dbReference type="CD-CODE" id="232F8A39">
    <property type="entry name" value="P-body"/>
</dbReference>
<dbReference type="CD-CODE" id="DEE660B4">
    <property type="entry name" value="Stress granule"/>
</dbReference>
<dbReference type="ChiTaRS" id="STAU1">
    <property type="organism name" value="human"/>
</dbReference>
<dbReference type="EvolutionaryTrace" id="O95793"/>
<dbReference type="GeneWiki" id="STAU1"/>
<dbReference type="GenomeRNAi" id="6780"/>
<dbReference type="Pharos" id="O95793">
    <property type="development level" value="Tbio"/>
</dbReference>
<dbReference type="PRO" id="PR:O95793"/>
<dbReference type="Proteomes" id="UP000005640">
    <property type="component" value="Chromosome 20"/>
</dbReference>
<dbReference type="RNAct" id="O95793">
    <property type="molecule type" value="protein"/>
</dbReference>
<dbReference type="Bgee" id="ENSG00000124214">
    <property type="expression patterns" value="Expressed in nephron tubule and 212 other cell types or tissues"/>
</dbReference>
<dbReference type="ExpressionAtlas" id="O95793">
    <property type="expression patterns" value="baseline and differential"/>
</dbReference>
<dbReference type="GO" id="GO:0044297">
    <property type="term" value="C:cell body"/>
    <property type="evidence" value="ECO:0000314"/>
    <property type="project" value="ParkinsonsUK-UCL"/>
</dbReference>
<dbReference type="GO" id="GO:0005737">
    <property type="term" value="C:cytoplasm"/>
    <property type="evidence" value="ECO:0000314"/>
    <property type="project" value="UniProtKB"/>
</dbReference>
<dbReference type="GO" id="GO:0036464">
    <property type="term" value="C:cytoplasmic ribonucleoprotein granule"/>
    <property type="evidence" value="ECO:0000314"/>
    <property type="project" value="ParkinsonsUK-UCL"/>
</dbReference>
<dbReference type="GO" id="GO:0010494">
    <property type="term" value="C:cytoplasmic stress granule"/>
    <property type="evidence" value="ECO:0000250"/>
    <property type="project" value="BHF-UCL"/>
</dbReference>
<dbReference type="GO" id="GO:0005829">
    <property type="term" value="C:cytosol"/>
    <property type="evidence" value="ECO:0000314"/>
    <property type="project" value="HPA"/>
</dbReference>
<dbReference type="GO" id="GO:0030425">
    <property type="term" value="C:dendrite"/>
    <property type="evidence" value="ECO:0000314"/>
    <property type="project" value="ParkinsonsUK-UCL"/>
</dbReference>
<dbReference type="GO" id="GO:0032839">
    <property type="term" value="C:dendrite cytoplasm"/>
    <property type="evidence" value="ECO:0007669"/>
    <property type="project" value="GOC"/>
</dbReference>
<dbReference type="GO" id="GO:0005783">
    <property type="term" value="C:endoplasmic reticulum"/>
    <property type="evidence" value="ECO:0000314"/>
    <property type="project" value="AgBase"/>
</dbReference>
<dbReference type="GO" id="GO:0070062">
    <property type="term" value="C:extracellular exosome"/>
    <property type="evidence" value="ECO:0007005"/>
    <property type="project" value="UniProtKB"/>
</dbReference>
<dbReference type="GO" id="GO:0098978">
    <property type="term" value="C:glutamatergic synapse"/>
    <property type="evidence" value="ECO:0007669"/>
    <property type="project" value="Ensembl"/>
</dbReference>
<dbReference type="GO" id="GO:0016020">
    <property type="term" value="C:membrane"/>
    <property type="evidence" value="ECO:0007005"/>
    <property type="project" value="UniProtKB"/>
</dbReference>
<dbReference type="GO" id="GO:0005875">
    <property type="term" value="C:microtubule associated complex"/>
    <property type="evidence" value="ECO:0000304"/>
    <property type="project" value="ProtInc"/>
</dbReference>
<dbReference type="GO" id="GO:0043005">
    <property type="term" value="C:neuron projection"/>
    <property type="evidence" value="ECO:0000318"/>
    <property type="project" value="GO_Central"/>
</dbReference>
<dbReference type="GO" id="GO:0043025">
    <property type="term" value="C:neuronal cell body"/>
    <property type="evidence" value="ECO:0000318"/>
    <property type="project" value="GO_Central"/>
</dbReference>
<dbReference type="GO" id="GO:0005886">
    <property type="term" value="C:plasma membrane"/>
    <property type="evidence" value="ECO:0000314"/>
    <property type="project" value="UniProtKB"/>
</dbReference>
<dbReference type="GO" id="GO:0005791">
    <property type="term" value="C:rough endoplasmic reticulum"/>
    <property type="evidence" value="ECO:0000304"/>
    <property type="project" value="ProtInc"/>
</dbReference>
<dbReference type="GO" id="GO:0003725">
    <property type="term" value="F:double-stranded RNA binding"/>
    <property type="evidence" value="ECO:0000318"/>
    <property type="project" value="GO_Central"/>
</dbReference>
<dbReference type="GO" id="GO:0003729">
    <property type="term" value="F:mRNA binding"/>
    <property type="evidence" value="ECO:0000318"/>
    <property type="project" value="GO_Central"/>
</dbReference>
<dbReference type="GO" id="GO:0008157">
    <property type="term" value="F:protein phosphatase 1 binding"/>
    <property type="evidence" value="ECO:0007669"/>
    <property type="project" value="Ensembl"/>
</dbReference>
<dbReference type="GO" id="GO:0003723">
    <property type="term" value="F:RNA binding"/>
    <property type="evidence" value="ECO:0007005"/>
    <property type="project" value="UniProtKB"/>
</dbReference>
<dbReference type="GO" id="GO:0098964">
    <property type="term" value="P:anterograde dendritic transport of messenger ribonucleoprotein complex"/>
    <property type="evidence" value="ECO:0000318"/>
    <property type="project" value="GO_Central"/>
</dbReference>
<dbReference type="GO" id="GO:0034599">
    <property type="term" value="P:cellular response to oxidative stress"/>
    <property type="evidence" value="ECO:0007669"/>
    <property type="project" value="Ensembl"/>
</dbReference>
<dbReference type="GO" id="GO:0007281">
    <property type="term" value="P:germ cell development"/>
    <property type="evidence" value="ECO:0000318"/>
    <property type="project" value="GO_Central"/>
</dbReference>
<dbReference type="GO" id="GO:0008298">
    <property type="term" value="P:intracellular mRNA localization"/>
    <property type="evidence" value="ECO:0000318"/>
    <property type="project" value="GO_Central"/>
</dbReference>
<dbReference type="GO" id="GO:0000512">
    <property type="term" value="P:lncRNA-mediated post-transcriptional gene silencing"/>
    <property type="evidence" value="ECO:0000304"/>
    <property type="project" value="ARUK-UCL"/>
</dbReference>
<dbReference type="GO" id="GO:0099010">
    <property type="term" value="P:modification of postsynaptic structure"/>
    <property type="evidence" value="ECO:0007669"/>
    <property type="project" value="Ensembl"/>
</dbReference>
<dbReference type="GO" id="GO:0046726">
    <property type="term" value="P:positive regulation by virus of viral protein levels in host cell"/>
    <property type="evidence" value="ECO:0000315"/>
    <property type="project" value="AgBase"/>
</dbReference>
<dbReference type="GO" id="GO:1900273">
    <property type="term" value="P:positive regulation of long-term synaptic potentiation"/>
    <property type="evidence" value="ECO:0007669"/>
    <property type="project" value="Ensembl"/>
</dbReference>
<dbReference type="GO" id="GO:0045070">
    <property type="term" value="P:positive regulation of viral genome replication"/>
    <property type="evidence" value="ECO:0000315"/>
    <property type="project" value="AgBase"/>
</dbReference>
<dbReference type="GO" id="GO:0035418">
    <property type="term" value="P:protein localization to synapse"/>
    <property type="evidence" value="ECO:0000318"/>
    <property type="project" value="GO_Central"/>
</dbReference>
<dbReference type="CDD" id="cd19881">
    <property type="entry name" value="DSRM_STAU1_rpt2"/>
    <property type="match status" value="1"/>
</dbReference>
<dbReference type="CDD" id="cd19883">
    <property type="entry name" value="DSRM_STAU1_rpt3"/>
    <property type="match status" value="1"/>
</dbReference>
<dbReference type="CDD" id="cd19885">
    <property type="entry name" value="DSRM_STAU1_rpt4"/>
    <property type="match status" value="1"/>
</dbReference>
<dbReference type="CDD" id="cd19887">
    <property type="entry name" value="DSRM_STAU1_rpt5"/>
    <property type="match status" value="1"/>
</dbReference>
<dbReference type="FunFam" id="3.30.160.20:FF:000007">
    <property type="entry name" value="Double-stranded RNA-binding protein Staufen homolog 1"/>
    <property type="match status" value="1"/>
</dbReference>
<dbReference type="FunFam" id="3.30.160.20:FF:000014">
    <property type="entry name" value="double-stranded RNA-binding protein Staufen homolog 1 isoform X1"/>
    <property type="match status" value="1"/>
</dbReference>
<dbReference type="FunFam" id="3.30.160.20:FF:000024">
    <property type="entry name" value="double-stranded RNA-binding protein Staufen homolog 1 isoform X1"/>
    <property type="match status" value="1"/>
</dbReference>
<dbReference type="FunFam" id="3.30.160.20:FF:000013">
    <property type="entry name" value="double-stranded RNA-binding protein Staufen homolog 2 isoform X3"/>
    <property type="match status" value="1"/>
</dbReference>
<dbReference type="Gene3D" id="3.30.160.20">
    <property type="match status" value="4"/>
</dbReference>
<dbReference type="Gene3D" id="6.10.250.1360">
    <property type="match status" value="1"/>
</dbReference>
<dbReference type="InterPro" id="IPR051740">
    <property type="entry name" value="DRBM-containing_protein"/>
</dbReference>
<dbReference type="InterPro" id="IPR014720">
    <property type="entry name" value="dsRBD_dom"/>
</dbReference>
<dbReference type="InterPro" id="IPR044475">
    <property type="entry name" value="STAU1_DSRM_3"/>
</dbReference>
<dbReference type="InterPro" id="IPR032478">
    <property type="entry name" value="Staufen_C"/>
</dbReference>
<dbReference type="PANTHER" id="PTHR46054:SF2">
    <property type="entry name" value="DOUBLE-STRANDED RNA-BINDING PROTEIN STAUFEN HOMOLOG 1"/>
    <property type="match status" value="1"/>
</dbReference>
<dbReference type="PANTHER" id="PTHR46054">
    <property type="entry name" value="MATERNAL EFFECT PROTEIN STAUFEN"/>
    <property type="match status" value="1"/>
</dbReference>
<dbReference type="Pfam" id="PF00035">
    <property type="entry name" value="dsrm"/>
    <property type="match status" value="3"/>
</dbReference>
<dbReference type="Pfam" id="PF16482">
    <property type="entry name" value="Staufen_C"/>
    <property type="match status" value="1"/>
</dbReference>
<dbReference type="SMART" id="SM00358">
    <property type="entry name" value="DSRM"/>
    <property type="match status" value="3"/>
</dbReference>
<dbReference type="SUPFAM" id="SSF54768">
    <property type="entry name" value="dsRNA-binding domain-like"/>
    <property type="match status" value="3"/>
</dbReference>
<dbReference type="PROSITE" id="PS50137">
    <property type="entry name" value="DS_RBD"/>
    <property type="match status" value="3"/>
</dbReference>
<feature type="initiator methionine" description="Removed" evidence="15">
    <location>
        <position position="1"/>
    </location>
</feature>
<feature type="chain" id="PRO_0000072243" description="Double-stranded RNA-binding protein Staufen homolog 1">
    <location>
        <begin position="2"/>
        <end position="577"/>
    </location>
</feature>
<feature type="domain" description="DRBM 1" evidence="2">
    <location>
        <begin position="72"/>
        <end position="162"/>
    </location>
</feature>
<feature type="domain" description="DRBM 2" evidence="2">
    <location>
        <begin position="184"/>
        <end position="251"/>
    </location>
</feature>
<feature type="domain" description="DRBM 3" evidence="2">
    <location>
        <begin position="286"/>
        <end position="354"/>
    </location>
</feature>
<feature type="region of interest" description="Disordered" evidence="3">
    <location>
        <begin position="34"/>
        <end position="55"/>
    </location>
</feature>
<feature type="region of interest" description="Disordered" evidence="3">
    <location>
        <begin position="360"/>
        <end position="397"/>
    </location>
</feature>
<feature type="compositionally biased region" description="Polar residues" evidence="3">
    <location>
        <begin position="34"/>
        <end position="44"/>
    </location>
</feature>
<feature type="compositionally biased region" description="Basic and acidic residues" evidence="3">
    <location>
        <begin position="366"/>
        <end position="384"/>
    </location>
</feature>
<feature type="modified residue" description="N-acetylserine" evidence="15">
    <location>
        <position position="2"/>
    </location>
</feature>
<feature type="modified residue" description="Asymmetric dimethylarginine" evidence="18">
    <location>
        <position position="108"/>
    </location>
</feature>
<feature type="modified residue" description="Asymmetric dimethylarginine; alternate" evidence="18">
    <location>
        <position position="115"/>
    </location>
</feature>
<feature type="modified residue" description="Omega-N-methylarginine; alternate" evidence="18">
    <location>
        <position position="115"/>
    </location>
</feature>
<feature type="modified residue" description="Phosphoserine" evidence="17">
    <location>
        <position position="176"/>
    </location>
</feature>
<feature type="modified residue" description="Phosphoserine" evidence="17">
    <location>
        <position position="278"/>
    </location>
</feature>
<feature type="modified residue" description="Phosphoserine" evidence="16 17">
    <location>
        <position position="390"/>
    </location>
</feature>
<feature type="splice variant" id="VSP_004434" description="In isoform Short and isoform 3." evidence="9 10 11 12 13">
    <location>
        <begin position="1"/>
        <end position="81"/>
    </location>
</feature>
<feature type="splice variant" id="VSP_043701" description="In isoform 3." evidence="13">
    <original>E</original>
    <variation>ESFPLKQ</variation>
    <location>
        <position position="203"/>
    </location>
</feature>
<feature type="sequence conflict" description="In Ref. 1 and 2." evidence="14" ref="1 2">
    <original>A</original>
    <variation>R</variation>
    <location>
        <position position="359"/>
    </location>
</feature>
<feature type="sequence conflict" description="In Ref. 2." evidence="14" ref="2">
    <original>QPTKPALKSEEKTPIKKPGDGRKVTFFEPGSGD</original>
    <variation>SHQTRTQVRGEDTHKETRGWKKSNLFLNLALGM</variation>
    <location>
        <begin position="360"/>
        <end position="392"/>
    </location>
</feature>
<feature type="helix" evidence="20">
    <location>
        <begin position="185"/>
        <end position="195"/>
    </location>
</feature>
<feature type="strand" evidence="20">
    <location>
        <begin position="200"/>
        <end position="209"/>
    </location>
</feature>
<feature type="helix" evidence="20">
    <location>
        <begin position="211"/>
        <end position="213"/>
    </location>
</feature>
<feature type="strand" evidence="20">
    <location>
        <begin position="215"/>
        <end position="222"/>
    </location>
</feature>
<feature type="strand" evidence="20">
    <location>
        <begin position="225"/>
        <end position="233"/>
    </location>
</feature>
<feature type="helix" evidence="20">
    <location>
        <begin position="234"/>
        <end position="249"/>
    </location>
</feature>
<feature type="strand" evidence="21">
    <location>
        <begin position="256"/>
        <end position="258"/>
    </location>
</feature>
<feature type="helix" evidence="20">
    <location>
        <begin position="287"/>
        <end position="292"/>
    </location>
</feature>
<feature type="turn" evidence="20">
    <location>
        <begin position="293"/>
        <end position="296"/>
    </location>
</feature>
<feature type="strand" evidence="20">
    <location>
        <begin position="304"/>
        <end position="308"/>
    </location>
</feature>
<feature type="strand" evidence="20">
    <location>
        <begin position="319"/>
        <end position="324"/>
    </location>
</feature>
<feature type="strand" evidence="21">
    <location>
        <begin position="329"/>
        <end position="332"/>
    </location>
</feature>
<feature type="strand" evidence="20">
    <location>
        <begin position="333"/>
        <end position="336"/>
    </location>
</feature>
<feature type="helix" evidence="20">
    <location>
        <begin position="337"/>
        <end position="346"/>
    </location>
</feature>
<feature type="turn" evidence="20">
    <location>
        <begin position="350"/>
        <end position="353"/>
    </location>
</feature>
<feature type="helix" evidence="19">
    <location>
        <begin position="448"/>
        <end position="462"/>
    </location>
</feature>
<feature type="helix" evidence="19">
    <location>
        <begin position="466"/>
        <end position="472"/>
    </location>
</feature>
<feature type="helix" evidence="19">
    <location>
        <begin position="489"/>
        <end position="500"/>
    </location>
</feature>
<feature type="strand" evidence="19">
    <location>
        <begin position="504"/>
        <end position="509"/>
    </location>
</feature>
<feature type="strand" evidence="19">
    <location>
        <begin position="517"/>
        <end position="523"/>
    </location>
</feature>
<feature type="strand" evidence="19">
    <location>
        <begin position="525"/>
        <end position="527"/>
    </location>
</feature>
<feature type="strand" evidence="19">
    <location>
        <begin position="529"/>
        <end position="537"/>
    </location>
</feature>
<feature type="helix" evidence="19">
    <location>
        <begin position="538"/>
        <end position="553"/>
    </location>
</feature>
<evidence type="ECO:0000250" key="1"/>
<evidence type="ECO:0000255" key="2">
    <source>
        <dbReference type="PROSITE-ProRule" id="PRU00266"/>
    </source>
</evidence>
<evidence type="ECO:0000256" key="3">
    <source>
        <dbReference type="SAM" id="MobiDB-lite"/>
    </source>
</evidence>
<evidence type="ECO:0000269" key="4">
    <source>
    </source>
</evidence>
<evidence type="ECO:0000269" key="5">
    <source>
    </source>
</evidence>
<evidence type="ECO:0000269" key="6">
    <source>
    </source>
</evidence>
<evidence type="ECO:0000269" key="7">
    <source>
    </source>
</evidence>
<evidence type="ECO:0000269" key="8">
    <source>
    </source>
</evidence>
<evidence type="ECO:0000303" key="9">
    <source>
    </source>
</evidence>
<evidence type="ECO:0000303" key="10">
    <source>
    </source>
</evidence>
<evidence type="ECO:0000303" key="11">
    <source>
    </source>
</evidence>
<evidence type="ECO:0000303" key="12">
    <source>
    </source>
</evidence>
<evidence type="ECO:0000303" key="13">
    <source ref="3"/>
</evidence>
<evidence type="ECO:0000305" key="14"/>
<evidence type="ECO:0007744" key="15">
    <source>
    </source>
</evidence>
<evidence type="ECO:0007744" key="16">
    <source>
    </source>
</evidence>
<evidence type="ECO:0007744" key="17">
    <source>
    </source>
</evidence>
<evidence type="ECO:0007744" key="18">
    <source>
    </source>
</evidence>
<evidence type="ECO:0007829" key="19">
    <source>
        <dbReference type="PDB" id="4DKK"/>
    </source>
</evidence>
<evidence type="ECO:0007829" key="20">
    <source>
        <dbReference type="PDB" id="6HTU"/>
    </source>
</evidence>
<evidence type="ECO:0007829" key="21">
    <source>
        <dbReference type="PDB" id="6SDW"/>
    </source>
</evidence>
<reference key="1">
    <citation type="journal article" date="1999" name="Mol. Cell. Biol.">
        <title>Mammalian Staufen is a double-stranded-RNA- and tubulin-binding protein which localizes to the rough endoplasmic reticulum.</title>
        <authorList>
            <person name="Wickham L."/>
            <person name="Duchaine T."/>
            <person name="Luo M."/>
            <person name="Nabi I.R."/>
            <person name="DesGroseillers L."/>
        </authorList>
    </citation>
    <scope>NUCLEOTIDE SEQUENCE [MRNA] (ISOFORM LONG)</scope>
    <source>
        <tissue>CNS</tissue>
    </source>
</reference>
<reference key="2">
    <citation type="journal article" date="1999" name="Nucleic Acids Res.">
        <title>Interaction of influenza virus NS1 protein and the human homologue of Staufen in vivo and in vitro.</title>
        <authorList>
            <person name="Falcon A.M."/>
            <person name="Fortes P."/>
            <person name="Marion R.M."/>
            <person name="Beloso A."/>
            <person name="Ortin J."/>
        </authorList>
    </citation>
    <scope>NUCLEOTIDE SEQUENCE [MRNA] (ISOFORM SHORT)</scope>
    <scope>FUNCTION (MICROBIAL INFECTION)</scope>
    <scope>INTERACTION WITH INFLUENZA VIRUS NS1 (MICROBIAL INFECTION)</scope>
    <source>
        <tissue>Kidney</tissue>
    </source>
</reference>
<reference key="3">
    <citation type="submission" date="2004-02" db="EMBL/GenBank/DDBJ databases">
        <title>Cloning and characterization of a splicing variant of human staufen protein.</title>
        <authorList>
            <person name="Mao Y."/>
            <person name="Xie Y."/>
            <person name="Jin F."/>
        </authorList>
    </citation>
    <scope>NUCLEOTIDE SEQUENCE [MRNA] (ISOFORM 3)</scope>
</reference>
<reference key="4">
    <citation type="journal article" date="2001" name="Genome Res.">
        <title>Towards a catalog of human genes and proteins: sequencing and analysis of 500 novel complete protein coding human cDNAs.</title>
        <authorList>
            <person name="Wiemann S."/>
            <person name="Weil B."/>
            <person name="Wellenreuther R."/>
            <person name="Gassenhuber J."/>
            <person name="Glassl S."/>
            <person name="Ansorge W."/>
            <person name="Boecher M."/>
            <person name="Bloecker H."/>
            <person name="Bauersachs S."/>
            <person name="Blum H."/>
            <person name="Lauber J."/>
            <person name="Duesterhoeft A."/>
            <person name="Beyer A."/>
            <person name="Koehrer K."/>
            <person name="Strack N."/>
            <person name="Mewes H.-W."/>
            <person name="Ottenwaelder B."/>
            <person name="Obermaier B."/>
            <person name="Tampe J."/>
            <person name="Heubner D."/>
            <person name="Wambutt R."/>
            <person name="Korn B."/>
            <person name="Klein M."/>
            <person name="Poustka A."/>
        </authorList>
    </citation>
    <scope>NUCLEOTIDE SEQUENCE [LARGE SCALE MRNA] (ISOFORM SHORT)</scope>
    <source>
        <tissue>Brain</tissue>
    </source>
</reference>
<reference key="5">
    <citation type="journal article" date="2004" name="Nat. Genet.">
        <title>Complete sequencing and characterization of 21,243 full-length human cDNAs.</title>
        <authorList>
            <person name="Ota T."/>
            <person name="Suzuki Y."/>
            <person name="Nishikawa T."/>
            <person name="Otsuki T."/>
            <person name="Sugiyama T."/>
            <person name="Irie R."/>
            <person name="Wakamatsu A."/>
            <person name="Hayashi K."/>
            <person name="Sato H."/>
            <person name="Nagai K."/>
            <person name="Kimura K."/>
            <person name="Makita H."/>
            <person name="Sekine M."/>
            <person name="Obayashi M."/>
            <person name="Nishi T."/>
            <person name="Shibahara T."/>
            <person name="Tanaka T."/>
            <person name="Ishii S."/>
            <person name="Yamamoto J."/>
            <person name="Saito K."/>
            <person name="Kawai Y."/>
            <person name="Isono Y."/>
            <person name="Nakamura Y."/>
            <person name="Nagahari K."/>
            <person name="Murakami K."/>
            <person name="Yasuda T."/>
            <person name="Iwayanagi T."/>
            <person name="Wagatsuma M."/>
            <person name="Shiratori A."/>
            <person name="Sudo H."/>
            <person name="Hosoiri T."/>
            <person name="Kaku Y."/>
            <person name="Kodaira H."/>
            <person name="Kondo H."/>
            <person name="Sugawara M."/>
            <person name="Takahashi M."/>
            <person name="Kanda K."/>
            <person name="Yokoi T."/>
            <person name="Furuya T."/>
            <person name="Kikkawa E."/>
            <person name="Omura Y."/>
            <person name="Abe K."/>
            <person name="Kamihara K."/>
            <person name="Katsuta N."/>
            <person name="Sato K."/>
            <person name="Tanikawa M."/>
            <person name="Yamazaki M."/>
            <person name="Ninomiya K."/>
            <person name="Ishibashi T."/>
            <person name="Yamashita H."/>
            <person name="Murakawa K."/>
            <person name="Fujimori K."/>
            <person name="Tanai H."/>
            <person name="Kimata M."/>
            <person name="Watanabe M."/>
            <person name="Hiraoka S."/>
            <person name="Chiba Y."/>
            <person name="Ishida S."/>
            <person name="Ono Y."/>
            <person name="Takiguchi S."/>
            <person name="Watanabe S."/>
            <person name="Yosida M."/>
            <person name="Hotuta T."/>
            <person name="Kusano J."/>
            <person name="Kanehori K."/>
            <person name="Takahashi-Fujii A."/>
            <person name="Hara H."/>
            <person name="Tanase T.-O."/>
            <person name="Nomura Y."/>
            <person name="Togiya S."/>
            <person name="Komai F."/>
            <person name="Hara R."/>
            <person name="Takeuchi K."/>
            <person name="Arita M."/>
            <person name="Imose N."/>
            <person name="Musashino K."/>
            <person name="Yuuki H."/>
            <person name="Oshima A."/>
            <person name="Sasaki N."/>
            <person name="Aotsuka S."/>
            <person name="Yoshikawa Y."/>
            <person name="Matsunawa H."/>
            <person name="Ichihara T."/>
            <person name="Shiohata N."/>
            <person name="Sano S."/>
            <person name="Moriya S."/>
            <person name="Momiyama H."/>
            <person name="Satoh N."/>
            <person name="Takami S."/>
            <person name="Terashima Y."/>
            <person name="Suzuki O."/>
            <person name="Nakagawa S."/>
            <person name="Senoh A."/>
            <person name="Mizoguchi H."/>
            <person name="Goto Y."/>
            <person name="Shimizu F."/>
            <person name="Wakebe H."/>
            <person name="Hishigaki H."/>
            <person name="Watanabe T."/>
            <person name="Sugiyama A."/>
            <person name="Takemoto M."/>
            <person name="Kawakami B."/>
            <person name="Yamazaki M."/>
            <person name="Watanabe K."/>
            <person name="Kumagai A."/>
            <person name="Itakura S."/>
            <person name="Fukuzumi Y."/>
            <person name="Fujimori Y."/>
            <person name="Komiyama M."/>
            <person name="Tashiro H."/>
            <person name="Tanigami A."/>
            <person name="Fujiwara T."/>
            <person name="Ono T."/>
            <person name="Yamada K."/>
            <person name="Fujii Y."/>
            <person name="Ozaki K."/>
            <person name="Hirao M."/>
            <person name="Ohmori Y."/>
            <person name="Kawabata A."/>
            <person name="Hikiji T."/>
            <person name="Kobatake N."/>
            <person name="Inagaki H."/>
            <person name="Ikema Y."/>
            <person name="Okamoto S."/>
            <person name="Okitani R."/>
            <person name="Kawakami T."/>
            <person name="Noguchi S."/>
            <person name="Itoh T."/>
            <person name="Shigeta K."/>
            <person name="Senba T."/>
            <person name="Matsumura K."/>
            <person name="Nakajima Y."/>
            <person name="Mizuno T."/>
            <person name="Morinaga M."/>
            <person name="Sasaki M."/>
            <person name="Togashi T."/>
            <person name="Oyama M."/>
            <person name="Hata H."/>
            <person name="Watanabe M."/>
            <person name="Komatsu T."/>
            <person name="Mizushima-Sugano J."/>
            <person name="Satoh T."/>
            <person name="Shirai Y."/>
            <person name="Takahashi Y."/>
            <person name="Nakagawa K."/>
            <person name="Okumura K."/>
            <person name="Nagase T."/>
            <person name="Nomura N."/>
            <person name="Kikuchi H."/>
            <person name="Masuho Y."/>
            <person name="Yamashita R."/>
            <person name="Nakai K."/>
            <person name="Yada T."/>
            <person name="Nakamura Y."/>
            <person name="Ohara O."/>
            <person name="Isogai T."/>
            <person name="Sugano S."/>
        </authorList>
    </citation>
    <scope>NUCLEOTIDE SEQUENCE [LARGE SCALE MRNA] (ISOFORM SHORT)</scope>
    <source>
        <tissue>Trachea</tissue>
    </source>
</reference>
<reference key="6">
    <citation type="journal article" date="2001" name="Nature">
        <title>The DNA sequence and comparative analysis of human chromosome 20.</title>
        <authorList>
            <person name="Deloukas P."/>
            <person name="Matthews L.H."/>
            <person name="Ashurst J.L."/>
            <person name="Burton J."/>
            <person name="Gilbert J.G.R."/>
            <person name="Jones M."/>
            <person name="Stavrides G."/>
            <person name="Almeida J.P."/>
            <person name="Babbage A.K."/>
            <person name="Bagguley C.L."/>
            <person name="Bailey J."/>
            <person name="Barlow K.F."/>
            <person name="Bates K.N."/>
            <person name="Beard L.M."/>
            <person name="Beare D.M."/>
            <person name="Beasley O.P."/>
            <person name="Bird C.P."/>
            <person name="Blakey S.E."/>
            <person name="Bridgeman A.M."/>
            <person name="Brown A.J."/>
            <person name="Buck D."/>
            <person name="Burrill W.D."/>
            <person name="Butler A.P."/>
            <person name="Carder C."/>
            <person name="Carter N.P."/>
            <person name="Chapman J.C."/>
            <person name="Clamp M."/>
            <person name="Clark G."/>
            <person name="Clark L.N."/>
            <person name="Clark S.Y."/>
            <person name="Clee C.M."/>
            <person name="Clegg S."/>
            <person name="Cobley V.E."/>
            <person name="Collier R.E."/>
            <person name="Connor R.E."/>
            <person name="Corby N.R."/>
            <person name="Coulson A."/>
            <person name="Coville G.J."/>
            <person name="Deadman R."/>
            <person name="Dhami P.D."/>
            <person name="Dunn M."/>
            <person name="Ellington A.G."/>
            <person name="Frankland J.A."/>
            <person name="Fraser A."/>
            <person name="French L."/>
            <person name="Garner P."/>
            <person name="Grafham D.V."/>
            <person name="Griffiths C."/>
            <person name="Griffiths M.N.D."/>
            <person name="Gwilliam R."/>
            <person name="Hall R.E."/>
            <person name="Hammond S."/>
            <person name="Harley J.L."/>
            <person name="Heath P.D."/>
            <person name="Ho S."/>
            <person name="Holden J.L."/>
            <person name="Howden P.J."/>
            <person name="Huckle E."/>
            <person name="Hunt A.R."/>
            <person name="Hunt S.E."/>
            <person name="Jekosch K."/>
            <person name="Johnson C.M."/>
            <person name="Johnson D."/>
            <person name="Kay M.P."/>
            <person name="Kimberley A.M."/>
            <person name="King A."/>
            <person name="Knights A."/>
            <person name="Laird G.K."/>
            <person name="Lawlor S."/>
            <person name="Lehvaeslaiho M.H."/>
            <person name="Leversha M.A."/>
            <person name="Lloyd C."/>
            <person name="Lloyd D.M."/>
            <person name="Lovell J.D."/>
            <person name="Marsh V.L."/>
            <person name="Martin S.L."/>
            <person name="McConnachie L.J."/>
            <person name="McLay K."/>
            <person name="McMurray A.A."/>
            <person name="Milne S.A."/>
            <person name="Mistry D."/>
            <person name="Moore M.J.F."/>
            <person name="Mullikin J.C."/>
            <person name="Nickerson T."/>
            <person name="Oliver K."/>
            <person name="Parker A."/>
            <person name="Patel R."/>
            <person name="Pearce T.A.V."/>
            <person name="Peck A.I."/>
            <person name="Phillimore B.J.C.T."/>
            <person name="Prathalingam S.R."/>
            <person name="Plumb R.W."/>
            <person name="Ramsay H."/>
            <person name="Rice C.M."/>
            <person name="Ross M.T."/>
            <person name="Scott C.E."/>
            <person name="Sehra H.K."/>
            <person name="Shownkeen R."/>
            <person name="Sims S."/>
            <person name="Skuce C.D."/>
            <person name="Smith M.L."/>
            <person name="Soderlund C."/>
            <person name="Steward C.A."/>
            <person name="Sulston J.E."/>
            <person name="Swann R.M."/>
            <person name="Sycamore N."/>
            <person name="Taylor R."/>
            <person name="Tee L."/>
            <person name="Thomas D.W."/>
            <person name="Thorpe A."/>
            <person name="Tracey A."/>
            <person name="Tromans A.C."/>
            <person name="Vaudin M."/>
            <person name="Wall M."/>
            <person name="Wallis J.M."/>
            <person name="Whitehead S.L."/>
            <person name="Whittaker P."/>
            <person name="Willey D.L."/>
            <person name="Williams L."/>
            <person name="Williams S.A."/>
            <person name="Wilming L."/>
            <person name="Wray P.W."/>
            <person name="Hubbard T."/>
            <person name="Durbin R.M."/>
            <person name="Bentley D.R."/>
            <person name="Beck S."/>
            <person name="Rogers J."/>
        </authorList>
    </citation>
    <scope>NUCLEOTIDE SEQUENCE [LARGE SCALE GENOMIC DNA]</scope>
</reference>
<reference key="7">
    <citation type="submission" date="2005-09" db="EMBL/GenBank/DDBJ databases">
        <authorList>
            <person name="Mural R.J."/>
            <person name="Istrail S."/>
            <person name="Sutton G.G."/>
            <person name="Florea L."/>
            <person name="Halpern A.L."/>
            <person name="Mobarry C.M."/>
            <person name="Lippert R."/>
            <person name="Walenz B."/>
            <person name="Shatkay H."/>
            <person name="Dew I."/>
            <person name="Miller J.R."/>
            <person name="Flanigan M.J."/>
            <person name="Edwards N.J."/>
            <person name="Bolanos R."/>
            <person name="Fasulo D."/>
            <person name="Halldorsson B.V."/>
            <person name="Hannenhalli S."/>
            <person name="Turner R."/>
            <person name="Yooseph S."/>
            <person name="Lu F."/>
            <person name="Nusskern D.R."/>
            <person name="Shue B.C."/>
            <person name="Zheng X.H."/>
            <person name="Zhong F."/>
            <person name="Delcher A.L."/>
            <person name="Huson D.H."/>
            <person name="Kravitz S.A."/>
            <person name="Mouchard L."/>
            <person name="Reinert K."/>
            <person name="Remington K.A."/>
            <person name="Clark A.G."/>
            <person name="Waterman M.S."/>
            <person name="Eichler E.E."/>
            <person name="Adams M.D."/>
            <person name="Hunkapiller M.W."/>
            <person name="Myers E.W."/>
            <person name="Venter J.C."/>
        </authorList>
    </citation>
    <scope>NUCLEOTIDE SEQUENCE [LARGE SCALE GENOMIC DNA]</scope>
</reference>
<reference key="8">
    <citation type="journal article" date="2004" name="Genome Res.">
        <title>The status, quality, and expansion of the NIH full-length cDNA project: the Mammalian Gene Collection (MGC).</title>
        <authorList>
            <consortium name="The MGC Project Team"/>
        </authorList>
    </citation>
    <scope>NUCLEOTIDE SEQUENCE [LARGE SCALE MRNA] (ISOFORMS LONG AND SHORT)</scope>
    <source>
        <tissue>Placenta</tissue>
        <tissue>Skin</tissue>
    </source>
</reference>
<reference key="9">
    <citation type="journal article" date="2008" name="Retrovirology">
        <title>The host protein Staufen1 interacts with the Pr55Gag zinc fingers and regulates HIV-1 assembly via its N-terminus.</title>
        <authorList>
            <person name="Chatel-Chaix L."/>
            <person name="Boulay K."/>
            <person name="Mouland A.J."/>
            <person name="Desgroseillers L."/>
        </authorList>
    </citation>
    <scope>FUNCTION (MICROBIAL INFECTION)</scope>
    <scope>INTERACTION WITH HIV-1 GAG POLYPROTEIN (MICROBIAL INFECTION)</scope>
</reference>
<reference key="10">
    <citation type="journal article" date="2009" name="Anal. Chem.">
        <title>Lys-N and trypsin cover complementary parts of the phosphoproteome in a refined SCX-based approach.</title>
        <authorList>
            <person name="Gauci S."/>
            <person name="Helbig A.O."/>
            <person name="Slijper M."/>
            <person name="Krijgsveld J."/>
            <person name="Heck A.J."/>
            <person name="Mohammed S."/>
        </authorList>
    </citation>
    <scope>ACETYLATION [LARGE SCALE ANALYSIS] AT SER-2</scope>
    <scope>CLEAVAGE OF INITIATOR METHIONINE [LARGE SCALE ANALYSIS]</scope>
    <scope>IDENTIFICATION BY MASS SPECTROMETRY [LARGE SCALE ANALYSIS]</scope>
</reference>
<reference key="11">
    <citation type="journal article" date="2009" name="RNA">
        <title>Control of c-myc mRNA stability by IGF2BP1-associated cytoplasmic RNPs.</title>
        <authorList>
            <person name="Weidensdorfer D."/>
            <person name="Stoehr N."/>
            <person name="Baude A."/>
            <person name="Lederer M."/>
            <person name="Koehn M."/>
            <person name="Schierhorn A."/>
            <person name="Buchmeier S."/>
            <person name="Wahle E."/>
            <person name="Huettelmaiery S."/>
        </authorList>
    </citation>
    <scope>IDENTIFICATION IN A MRNP COMPLEX</scope>
    <scope>SUBCELLULAR LOCATION</scope>
    <scope>IDENTIFICATION BY MASS SPECTROMETRY</scope>
</reference>
<reference key="12">
    <citation type="journal article" date="2009" name="Science">
        <title>Lysine acetylation targets protein complexes and co-regulates major cellular functions.</title>
        <authorList>
            <person name="Choudhary C."/>
            <person name="Kumar C."/>
            <person name="Gnad F."/>
            <person name="Nielsen M.L."/>
            <person name="Rehman M."/>
            <person name="Walther T.C."/>
            <person name="Olsen J.V."/>
            <person name="Mann M."/>
        </authorList>
    </citation>
    <scope>IDENTIFICATION BY MASS SPECTROMETRY [LARGE SCALE ANALYSIS]</scope>
</reference>
<reference key="13">
    <citation type="journal article" date="2011" name="BMC Syst. Biol.">
        <title>Initial characterization of the human central proteome.</title>
        <authorList>
            <person name="Burkard T.R."/>
            <person name="Planyavsky M."/>
            <person name="Kaupe I."/>
            <person name="Breitwieser F.P."/>
            <person name="Buerckstuemmer T."/>
            <person name="Bennett K.L."/>
            <person name="Superti-Furga G."/>
            <person name="Colinge J."/>
        </authorList>
    </citation>
    <scope>IDENTIFICATION BY MASS SPECTROMETRY [LARGE SCALE ANALYSIS]</scope>
</reference>
<reference key="14">
    <citation type="journal article" date="2011" name="Sci. Signal.">
        <title>System-wide temporal characterization of the proteome and phosphoproteome of human embryonic stem cell differentiation.</title>
        <authorList>
            <person name="Rigbolt K.T."/>
            <person name="Prokhorova T.A."/>
            <person name="Akimov V."/>
            <person name="Henningsen J."/>
            <person name="Johansen P.T."/>
            <person name="Kratchmarova I."/>
            <person name="Kassem M."/>
            <person name="Mann M."/>
            <person name="Olsen J.V."/>
            <person name="Blagoev B."/>
        </authorList>
    </citation>
    <scope>PHOSPHORYLATION [LARGE SCALE ANALYSIS] AT SER-390</scope>
    <scope>IDENTIFICATION BY MASS SPECTROMETRY [LARGE SCALE ANALYSIS]</scope>
</reference>
<reference key="15">
    <citation type="journal article" date="2013" name="J. Proteome Res.">
        <title>Toward a comprehensive characterization of a human cancer cell phosphoproteome.</title>
        <authorList>
            <person name="Zhou H."/>
            <person name="Di Palma S."/>
            <person name="Preisinger C."/>
            <person name="Peng M."/>
            <person name="Polat A.N."/>
            <person name="Heck A.J."/>
            <person name="Mohammed S."/>
        </authorList>
    </citation>
    <scope>PHOSPHORYLATION [LARGE SCALE ANALYSIS] AT SER-176; SER-278 AND SER-390</scope>
    <scope>IDENTIFICATION BY MASS SPECTROMETRY [LARGE SCALE ANALYSIS]</scope>
    <source>
        <tissue>Cervix carcinoma</tissue>
        <tissue>Erythroleukemia</tissue>
    </source>
</reference>
<reference key="16">
    <citation type="journal article" date="2013" name="J. Virol.">
        <title>Staufen-1 interacts with the human endogenous retrovirus family HERV-K(HML-2) rec and gag proteins and increases virion production.</title>
        <authorList>
            <person name="Hanke K."/>
            <person name="Hohn O."/>
            <person name="Liedgens L."/>
            <person name="Fiddeke K."/>
            <person name="Wamara J."/>
            <person name="Kurth R."/>
            <person name="Bannert N."/>
        </authorList>
    </citation>
    <scope>FUNCTION (MICROBIAL INFECTION)</scope>
    <scope>INTERACTION WITH HERV-K REC AND GAG PROTEINS (MICROBIAL INFECTION)</scope>
</reference>
<reference key="17">
    <citation type="journal article" date="2014" name="Mol. Cell. Proteomics">
        <title>Immunoaffinity enrichment and mass spectrometry analysis of protein methylation.</title>
        <authorList>
            <person name="Guo A."/>
            <person name="Gu H."/>
            <person name="Zhou J."/>
            <person name="Mulhern D."/>
            <person name="Wang Y."/>
            <person name="Lee K.A."/>
            <person name="Yang V."/>
            <person name="Aguiar M."/>
            <person name="Kornhauser J."/>
            <person name="Jia X."/>
            <person name="Ren J."/>
            <person name="Beausoleil S.A."/>
            <person name="Silva J.C."/>
            <person name="Vemulapalli V."/>
            <person name="Bedford M.T."/>
            <person name="Comb M.J."/>
        </authorList>
    </citation>
    <scope>METHYLATION [LARGE SCALE ANALYSIS] AT ARG-108 AND ARG-115</scope>
    <scope>IDENTIFICATION BY MASS SPECTROMETRY [LARGE SCALE ANALYSIS]</scope>
    <source>
        <tissue>Colon carcinoma</tissue>
    </source>
</reference>
<reference key="18">
    <citation type="journal article" date="2018" name="MBio">
        <title>Staufen1 Interacts with Multiple Components of the Ebola Virus Ribonucleoprotein and Enhances Viral RNA Synthesis.</title>
        <authorList>
            <person name="Fang J."/>
            <person name="Pietzsch C."/>
            <person name="Ramanathan P."/>
            <person name="Santos R.I."/>
            <person name="Ilinykh P.A."/>
            <person name="Garcia-Blanco M.A."/>
            <person name="Bukreyev A."/>
            <person name="Bradrick S.S."/>
        </authorList>
    </citation>
    <scope>FUNCTION (MICROBIAL INFECTION)</scope>
    <scope>INTERACTION WITH EBOLA VIRUS NP (MICROBIAL INFECTION)</scope>
    <scope>INTERACTION WITH EBOLAVIRUS VP30 (MICROBIAL INFECTION)</scope>
    <scope>INTERACTION WITH EBOLA VIRUS VP35 (MICROBIAL INFECTION)</scope>
</reference>
<comment type="function">
    <text>Binds double-stranded RNA (regardless of the sequence) and tubulin. May play a role in specific positioning of mRNAs at given sites in the cell by cross-linking cytoskeletal and RNA components, and in stimulating their translation at the site.</text>
</comment>
<comment type="function">
    <text evidence="4 5 7 8">(Microbial infection) Plays a role in virus particles production of many viruses including of HIV-1, HERV-K, ebola virus and influenza virus. Acts by interacting with various viral proteins involved in particle budding process.</text>
</comment>
<comment type="subunit">
    <text evidence="1 6">Binds tubulin. Binds with low affinity single-stranded RNA or DNA homopolymers. Interacts with CASC3 in an RNA-dependent manner (By similarity). Identified in a mRNP complex, at least composed of DHX9, DDX3X, ELAVL1, HNRNPU, IGF2BP1, ILF3, PABPC1, PCBP2, PTBP2, STAU1, STAU2, SYNCRIP and YBX1.</text>
</comment>
<comment type="subunit">
    <text evidence="7">(Microbial infection) Interacts with HERV-K rec and gag proteins.</text>
</comment>
<comment type="subunit">
    <text evidence="5">(Microbial infection) Interacts with HIV-1 GAG polyprotein.</text>
</comment>
<comment type="subunit">
    <text evidence="4">(Microbial infection) Interacts with influenza virus NS1 protein.</text>
</comment>
<comment type="subunit">
    <text evidence="8">(Microbial infection) Interacts with Ebola virus NP, VP30 and VP35.</text>
</comment>
<comment type="interaction">
    <interactant intactId="EBI-358174">
        <id>O95793</id>
    </interactant>
    <interactant intactId="EBI-12002366">
        <id>P78563-4</id>
        <label>ADARB1</label>
    </interactant>
    <organismsDiffer>false</organismsDiffer>
    <experiments>3</experiments>
</comment>
<comment type="interaction">
    <interactant intactId="EBI-358174">
        <id>O95793</id>
    </interactant>
    <interactant intactId="EBI-302641">
        <id>P05067-4</id>
        <label>APP</label>
    </interactant>
    <organismsDiffer>false</organismsDiffer>
    <experiments>2</experiments>
</comment>
<comment type="interaction">
    <interactant intactId="EBI-358174">
        <id>O95793</id>
    </interactant>
    <interactant intactId="EBI-349854">
        <id>P13569</id>
        <label>CFTR</label>
    </interactant>
    <organismsDiffer>false</organismsDiffer>
    <experiments>13</experiments>
</comment>
<comment type="interaction">
    <interactant intactId="EBI-358174">
        <id>O95793</id>
    </interactant>
    <interactant intactId="EBI-374781">
        <id>O76003</id>
        <label>GLRX3</label>
    </interactant>
    <organismsDiffer>false</organismsDiffer>
    <experiments>3</experiments>
</comment>
<comment type="interaction">
    <interactant intactId="EBI-358174">
        <id>O95793</id>
    </interactant>
    <interactant intactId="EBI-1053892">
        <id>Q9NZI8</id>
        <label>IGF2BP1</label>
    </interactant>
    <organismsDiffer>false</organismsDiffer>
    <experiments>7</experiments>
</comment>
<comment type="interaction">
    <interactant intactId="EBI-358174">
        <id>O95793</id>
    </interactant>
    <interactant intactId="EBI-2341787">
        <id>Q17RB8</id>
        <label>LONRF1</label>
    </interactant>
    <organismsDiffer>false</organismsDiffer>
    <experiments>6</experiments>
</comment>
<comment type="interaction">
    <interactant intactId="EBI-358174">
        <id>O95793</id>
    </interactant>
    <interactant intactId="EBI-766011">
        <id>O15226</id>
        <label>NKRF</label>
    </interactant>
    <organismsDiffer>false</organismsDiffer>
    <experiments>3</experiments>
</comment>
<comment type="interaction">
    <interactant intactId="EBI-358174">
        <id>O95793</id>
    </interactant>
    <interactant intactId="EBI-301889">
        <id>Q9UKK6</id>
        <label>NXT1</label>
    </interactant>
    <organismsDiffer>false</organismsDiffer>
    <experiments>6</experiments>
</comment>
<comment type="interaction">
    <interactant intactId="EBI-358174">
        <id>O95793</id>
    </interactant>
    <interactant intactId="EBI-713955">
        <id>O75569</id>
        <label>PRKRA</label>
    </interactant>
    <organismsDiffer>false</organismsDiffer>
    <experiments>5</experiments>
</comment>
<comment type="interaction">
    <interactant intactId="EBI-358174">
        <id>O95793</id>
    </interactant>
    <interactant intactId="EBI-354172">
        <id>P62424</id>
        <label>RPL7A</label>
    </interactant>
    <organismsDiffer>false</organismsDiffer>
    <experiments>4</experiments>
</comment>
<comment type="interaction">
    <interactant intactId="EBI-358174">
        <id>O95793</id>
    </interactant>
    <interactant intactId="EBI-354101">
        <id>P05388</id>
        <label>RPLP0</label>
    </interactant>
    <organismsDiffer>false</organismsDiffer>
    <experiments>6</experiments>
</comment>
<comment type="interaction">
    <interactant intactId="EBI-358174">
        <id>O95793</id>
    </interactant>
    <interactant intactId="EBI-740355">
        <id>Q96SI9</id>
        <label>STRBP</label>
    </interactant>
    <organismsDiffer>false</organismsDiffer>
    <experiments>3</experiments>
</comment>
<comment type="interaction">
    <interactant intactId="EBI-358174">
        <id>O95793</id>
    </interactant>
    <interactant intactId="EBI-373471">
        <id>Q92900</id>
        <label>UPF1</label>
    </interactant>
    <organismsDiffer>false</organismsDiffer>
    <experiments>6</experiments>
</comment>
<comment type="interaction">
    <interactant intactId="EBI-358174">
        <id>O95793</id>
    </interactant>
    <interactant intactId="EBI-2548480">
        <id>Q9HA38</id>
        <label>ZMAT3</label>
    </interactant>
    <organismsDiffer>false</organismsDiffer>
    <experiments>3</experiments>
</comment>
<comment type="interaction">
    <interactant intactId="EBI-358174">
        <id>O95793</id>
    </interactant>
    <interactant intactId="EBI-3043905">
        <id>Q60793</id>
        <label>Klf4</label>
    </interactant>
    <organismsDiffer>true</organismsDiffer>
    <experiments>7</experiments>
</comment>
<comment type="interaction">
    <interactant intactId="EBI-358174">
        <id>O95793</id>
    </interactant>
    <interactant intactId="EBI-2547442">
        <id>P03496</id>
        <label>NS</label>
    </interactant>
    <organismsDiffer>true</organismsDiffer>
    <experiments>6</experiments>
</comment>
<comment type="interaction">
    <interactant intactId="EBI-358189">
        <id>O95793-2</id>
    </interactant>
    <interactant intactId="EBI-747719">
        <id>Q96H20</id>
        <label>SNF8</label>
    </interactant>
    <organismsDiffer>false</organismsDiffer>
    <experiments>3</experiments>
</comment>
<comment type="interaction">
    <interactant intactId="EBI-358189">
        <id>O95793-2</id>
    </interactant>
    <interactant intactId="EBI-6163428">
        <id>P04591</id>
        <label>gag</label>
    </interactant>
    <organismsDiffer>true</organismsDiffer>
    <experiments>4</experiments>
</comment>
<comment type="interaction">
    <interactant intactId="EBI-358189">
        <id>O95793-2</id>
    </interactant>
    <interactant intactId="EBI-9871255">
        <id>PRO_0000038594</id>
        <label>gag</label>
        <dbReference type="UniProtKB" id="P04591"/>
    </interactant>
    <organismsDiffer>true</organismsDiffer>
    <experiments>2</experiments>
</comment>
<comment type="subcellular location">
    <subcellularLocation>
        <location evidence="6">Cytoplasm</location>
    </subcellularLocation>
    <subcellularLocation>
        <location evidence="6">Rough endoplasmic reticulum</location>
    </subcellularLocation>
    <text>Localizes exclusively with the rough endoplasmic reticulum (RER).</text>
</comment>
<comment type="alternative products">
    <event type="alternative splicing"/>
    <isoform>
        <id>O95793-1</id>
        <name>Long</name>
        <sequence type="displayed"/>
    </isoform>
    <isoform>
        <id>O95793-2</id>
        <name>Short</name>
        <sequence type="described" ref="VSP_004434"/>
    </isoform>
    <isoform>
        <id>O95793-3</id>
        <name>3</name>
        <sequence type="described" ref="VSP_004434 VSP_043701"/>
    </isoform>
</comment>
<comment type="tissue specificity">
    <text>Widely expressed. Expressed in brain, pancreas, heart, skeletal muscles, liver, lung, kidney and placenta.</text>
</comment>
<comment type="domain">
    <text>One of the DRDB could be involved in RER binding.</text>
</comment>
<comment type="domain">
    <text evidence="1">The C-terminal contains the tubulin binding domain (TBD).</text>
</comment>
<protein>
    <recommendedName>
        <fullName>Double-stranded RNA-binding protein Staufen homolog 1</fullName>
    </recommendedName>
</protein>
<gene>
    <name type="primary">STAU1</name>
    <name type="synonym">STAU</name>
</gene>
<accession>O95793</accession>
<accession>A8K9Z4</accession>
<accession>E1P5Y1</accession>
<accession>E1P608</accession>
<accession>Q5JW29</accession>
<accession>Q6GTM4</accession>
<accession>Q9H5B4</accession>
<accession>Q9H5B5</accession>
<accession>Q9Y3Q2</accession>